<keyword id="KW-0029">Amino-acid transport</keyword>
<keyword id="KW-0067">ATP-binding</keyword>
<keyword id="KW-0997">Cell inner membrane</keyword>
<keyword id="KW-1003">Cell membrane</keyword>
<keyword id="KW-0472">Membrane</keyword>
<keyword id="KW-0547">Nucleotide-binding</keyword>
<keyword id="KW-1185">Reference proteome</keyword>
<keyword id="KW-1278">Translocase</keyword>
<keyword id="KW-0813">Transport</keyword>
<feature type="chain" id="PRO_0000270367" description="Methionine import ATP-binding protein MetN">
    <location>
        <begin position="1"/>
        <end position="353"/>
    </location>
</feature>
<feature type="domain" description="ABC transporter" evidence="1">
    <location>
        <begin position="11"/>
        <end position="251"/>
    </location>
</feature>
<feature type="binding site" evidence="1">
    <location>
        <begin position="48"/>
        <end position="55"/>
    </location>
    <ligand>
        <name>ATP</name>
        <dbReference type="ChEBI" id="CHEBI:30616"/>
    </ligand>
</feature>
<sequence length="353" mass="37421">MRDEQATGAAITFDRVEKSFAQKGGAPVMALSDCTLTVEPGAITGIIGRSGAGKSTLLRMVNGLERPTGGRVLVGGRDVGAADGAELREIRREVGMIFQHFNLLASRTVFGNVALPLEIAGRPSSEIRTRVADLIARVGLEALADRYPAELSGGQKQRVGIARALATGPKVLLSDEATSALDPETTQTVLRLLADINRDLGLTILLITHEMGVVRDIATHMAVIDGGRIVEAGPTYDIFVRPEHPTTRSFLSGVTGVTLPAFVASRLRPAPPEGPSQEVIRITFAGRHATDPMLARLTGELGIAVNILAGAIEEIGPHPFGNLLVSVETPRGAEARAYLERHQLLTEVLGYVG</sequence>
<reference key="1">
    <citation type="submission" date="2005-09" db="EMBL/GenBank/DDBJ databases">
        <title>Complete sequence of chromosome 1 of Rhodobacter sphaeroides 2.4.1.</title>
        <authorList>
            <person name="Copeland A."/>
            <person name="Lucas S."/>
            <person name="Lapidus A."/>
            <person name="Barry K."/>
            <person name="Detter J.C."/>
            <person name="Glavina T."/>
            <person name="Hammon N."/>
            <person name="Israni S."/>
            <person name="Pitluck S."/>
            <person name="Richardson P."/>
            <person name="Mackenzie C."/>
            <person name="Choudhary M."/>
            <person name="Larimer F."/>
            <person name="Hauser L.J."/>
            <person name="Land M."/>
            <person name="Donohue T.J."/>
            <person name="Kaplan S."/>
        </authorList>
    </citation>
    <scope>NUCLEOTIDE SEQUENCE [LARGE SCALE GENOMIC DNA]</scope>
    <source>
        <strain>ATCC 17023 / DSM 158 / JCM 6121 / CCUG 31486 / LMG 2827 / NBRC 12203 / NCIMB 8253 / ATH 2.4.1.</strain>
    </source>
</reference>
<dbReference type="EC" id="7.4.2.11" evidence="1"/>
<dbReference type="EMBL" id="CP000143">
    <property type="protein sequence ID" value="ABA79304.1"/>
    <property type="molecule type" value="Genomic_DNA"/>
</dbReference>
<dbReference type="RefSeq" id="WP_002720278.1">
    <property type="nucleotide sequence ID" value="NZ_CP030271.1"/>
</dbReference>
<dbReference type="RefSeq" id="YP_353205.1">
    <property type="nucleotide sequence ID" value="NC_007493.2"/>
</dbReference>
<dbReference type="SMR" id="Q3J1N0"/>
<dbReference type="STRING" id="272943.RSP_0129"/>
<dbReference type="EnsemblBacteria" id="ABA79304">
    <property type="protein sequence ID" value="ABA79304"/>
    <property type="gene ID" value="RSP_0129"/>
</dbReference>
<dbReference type="GeneID" id="3719697"/>
<dbReference type="KEGG" id="rsp:RSP_0129"/>
<dbReference type="PATRIC" id="fig|272943.9.peg.2070"/>
<dbReference type="eggNOG" id="COG1135">
    <property type="taxonomic scope" value="Bacteria"/>
</dbReference>
<dbReference type="OrthoDB" id="9802264at2"/>
<dbReference type="PhylomeDB" id="Q3J1N0"/>
<dbReference type="Proteomes" id="UP000002703">
    <property type="component" value="Chromosome 1"/>
</dbReference>
<dbReference type="GO" id="GO:0005886">
    <property type="term" value="C:plasma membrane"/>
    <property type="evidence" value="ECO:0007669"/>
    <property type="project" value="UniProtKB-SubCell"/>
</dbReference>
<dbReference type="GO" id="GO:0033232">
    <property type="term" value="F:ABC-type D-methionine transporter activity"/>
    <property type="evidence" value="ECO:0007669"/>
    <property type="project" value="UniProtKB-EC"/>
</dbReference>
<dbReference type="GO" id="GO:0005524">
    <property type="term" value="F:ATP binding"/>
    <property type="evidence" value="ECO:0007669"/>
    <property type="project" value="UniProtKB-KW"/>
</dbReference>
<dbReference type="GO" id="GO:0016887">
    <property type="term" value="F:ATP hydrolysis activity"/>
    <property type="evidence" value="ECO:0007669"/>
    <property type="project" value="InterPro"/>
</dbReference>
<dbReference type="CDD" id="cd03258">
    <property type="entry name" value="ABC_MetN_methionine_transporter"/>
    <property type="match status" value="1"/>
</dbReference>
<dbReference type="Gene3D" id="3.30.70.260">
    <property type="match status" value="1"/>
</dbReference>
<dbReference type="Gene3D" id="3.40.50.300">
    <property type="entry name" value="P-loop containing nucleotide triphosphate hydrolases"/>
    <property type="match status" value="1"/>
</dbReference>
<dbReference type="InterPro" id="IPR003593">
    <property type="entry name" value="AAA+_ATPase"/>
</dbReference>
<dbReference type="InterPro" id="IPR003439">
    <property type="entry name" value="ABC_transporter-like_ATP-bd"/>
</dbReference>
<dbReference type="InterPro" id="IPR017871">
    <property type="entry name" value="ABC_transporter-like_CS"/>
</dbReference>
<dbReference type="InterPro" id="IPR045865">
    <property type="entry name" value="ACT-like_dom_sf"/>
</dbReference>
<dbReference type="InterPro" id="IPR041701">
    <property type="entry name" value="MetN_ABC"/>
</dbReference>
<dbReference type="InterPro" id="IPR050086">
    <property type="entry name" value="MetN_ABC_transporter-like"/>
</dbReference>
<dbReference type="InterPro" id="IPR018449">
    <property type="entry name" value="NIL_domain"/>
</dbReference>
<dbReference type="InterPro" id="IPR027417">
    <property type="entry name" value="P-loop_NTPase"/>
</dbReference>
<dbReference type="PANTHER" id="PTHR43166">
    <property type="entry name" value="AMINO ACID IMPORT ATP-BINDING PROTEIN"/>
    <property type="match status" value="1"/>
</dbReference>
<dbReference type="PANTHER" id="PTHR43166:SF30">
    <property type="entry name" value="METHIONINE IMPORT ATP-BINDING PROTEIN METN"/>
    <property type="match status" value="1"/>
</dbReference>
<dbReference type="Pfam" id="PF00005">
    <property type="entry name" value="ABC_tran"/>
    <property type="match status" value="1"/>
</dbReference>
<dbReference type="Pfam" id="PF09383">
    <property type="entry name" value="NIL"/>
    <property type="match status" value="1"/>
</dbReference>
<dbReference type="SMART" id="SM00382">
    <property type="entry name" value="AAA"/>
    <property type="match status" value="1"/>
</dbReference>
<dbReference type="SMART" id="SM00930">
    <property type="entry name" value="NIL"/>
    <property type="match status" value="1"/>
</dbReference>
<dbReference type="SUPFAM" id="SSF55021">
    <property type="entry name" value="ACT-like"/>
    <property type="match status" value="1"/>
</dbReference>
<dbReference type="SUPFAM" id="SSF52540">
    <property type="entry name" value="P-loop containing nucleoside triphosphate hydrolases"/>
    <property type="match status" value="1"/>
</dbReference>
<dbReference type="PROSITE" id="PS00211">
    <property type="entry name" value="ABC_TRANSPORTER_1"/>
    <property type="match status" value="1"/>
</dbReference>
<dbReference type="PROSITE" id="PS50893">
    <property type="entry name" value="ABC_TRANSPORTER_2"/>
    <property type="match status" value="1"/>
</dbReference>
<dbReference type="PROSITE" id="PS51264">
    <property type="entry name" value="METN"/>
    <property type="match status" value="1"/>
</dbReference>
<evidence type="ECO:0000255" key="1">
    <source>
        <dbReference type="HAMAP-Rule" id="MF_01719"/>
    </source>
</evidence>
<gene>
    <name evidence="1" type="primary">metN</name>
    <name type="ordered locus">RHOS4_17360</name>
    <name type="ORF">RSP_0129</name>
</gene>
<comment type="function">
    <text evidence="1">Part of the ABC transporter complex MetNIQ involved in methionine import. Responsible for energy coupling to the transport system.</text>
</comment>
<comment type="catalytic activity">
    <reaction evidence="1">
        <text>L-methionine(out) + ATP + H2O = L-methionine(in) + ADP + phosphate + H(+)</text>
        <dbReference type="Rhea" id="RHEA:29779"/>
        <dbReference type="ChEBI" id="CHEBI:15377"/>
        <dbReference type="ChEBI" id="CHEBI:15378"/>
        <dbReference type="ChEBI" id="CHEBI:30616"/>
        <dbReference type="ChEBI" id="CHEBI:43474"/>
        <dbReference type="ChEBI" id="CHEBI:57844"/>
        <dbReference type="ChEBI" id="CHEBI:456216"/>
        <dbReference type="EC" id="7.4.2.11"/>
    </reaction>
</comment>
<comment type="catalytic activity">
    <reaction evidence="1">
        <text>D-methionine(out) + ATP + H2O = D-methionine(in) + ADP + phosphate + H(+)</text>
        <dbReference type="Rhea" id="RHEA:29767"/>
        <dbReference type="ChEBI" id="CHEBI:15377"/>
        <dbReference type="ChEBI" id="CHEBI:15378"/>
        <dbReference type="ChEBI" id="CHEBI:30616"/>
        <dbReference type="ChEBI" id="CHEBI:43474"/>
        <dbReference type="ChEBI" id="CHEBI:57932"/>
        <dbReference type="ChEBI" id="CHEBI:456216"/>
        <dbReference type="EC" id="7.4.2.11"/>
    </reaction>
</comment>
<comment type="subunit">
    <text evidence="1">The complex is composed of two ATP-binding proteins (MetN), two transmembrane proteins (MetI) and a solute-binding protein (MetQ).</text>
</comment>
<comment type="subcellular location">
    <subcellularLocation>
        <location evidence="1">Cell inner membrane</location>
        <topology evidence="1">Peripheral membrane protein</topology>
    </subcellularLocation>
</comment>
<comment type="similarity">
    <text evidence="1">Belongs to the ABC transporter superfamily. Methionine importer (TC 3.A.1.24) family.</text>
</comment>
<organism>
    <name type="scientific">Cereibacter sphaeroides (strain ATCC 17023 / DSM 158 / JCM 6121 / CCUG 31486 / LMG 2827 / NBRC 12203 / NCIMB 8253 / ATH 2.4.1.)</name>
    <name type="common">Rhodobacter sphaeroides</name>
    <dbReference type="NCBI Taxonomy" id="272943"/>
    <lineage>
        <taxon>Bacteria</taxon>
        <taxon>Pseudomonadati</taxon>
        <taxon>Pseudomonadota</taxon>
        <taxon>Alphaproteobacteria</taxon>
        <taxon>Rhodobacterales</taxon>
        <taxon>Paracoccaceae</taxon>
        <taxon>Cereibacter</taxon>
    </lineage>
</organism>
<proteinExistence type="inferred from homology"/>
<protein>
    <recommendedName>
        <fullName evidence="1">Methionine import ATP-binding protein MetN</fullName>
        <ecNumber evidence="1">7.4.2.11</ecNumber>
    </recommendedName>
</protein>
<accession>Q3J1N0</accession>
<name>METN_CERS4</name>